<proteinExistence type="evidence at protein level"/>
<sequence>MGKGDPNKPRGKMSSYAFFVQTCREEHKKKHPDSSVNFAEFSKKCSERWKTMSAKEKSKFEDLAKSDKARYDREMKNYVPPKGDKKGKKKDPNAPKRPPSAFFLFCSENRPKIKIEHPGLSIGDTAKKLGEMWSEQSAKDKQPYEQKAAKLKEKYEKDIAAYRAKGKSEAGKKGPGRPTGSKKKNEPEDEEEEEEEEEEEDDEEEEEDEE</sequence>
<name>HMGB2_MOUSE</name>
<gene>
    <name type="primary">Hmgb2</name>
    <name type="synonym">Hmg2</name>
</gene>
<keyword id="KW-0007">Acetylation</keyword>
<keyword id="KW-0145">Chemotaxis</keyword>
<keyword id="KW-0158">Chromosome</keyword>
<keyword id="KW-0963">Cytoplasm</keyword>
<keyword id="KW-1015">Disulfide bond</keyword>
<keyword id="KW-0233">DNA recombination</keyword>
<keyword id="KW-0238">DNA-binding</keyword>
<keyword id="KW-0391">Immunity</keyword>
<keyword id="KW-0395">Inflammatory response</keyword>
<keyword id="KW-0399">Innate immunity</keyword>
<keyword id="KW-0539">Nucleus</keyword>
<keyword id="KW-0558">Oxidation</keyword>
<keyword id="KW-0597">Phosphoprotein</keyword>
<keyword id="KW-1185">Reference proteome</keyword>
<keyword id="KW-0677">Repeat</keyword>
<keyword id="KW-0964">Secreted</keyword>
<keyword id="KW-0804">Transcription</keyword>
<keyword id="KW-0805">Transcription regulation</keyword>
<reference key="1">
    <citation type="journal article" date="1992" name="Nucleic Acids Res.">
        <title>Nucleotide sequence of a mouse cDNA encoding the non-histone chromosomal high mobility group protein-2 (HMG-2).</title>
        <authorList>
            <person name="Stolzenburg F."/>
            <person name="Dinkl E."/>
            <person name="Grummt F."/>
        </authorList>
    </citation>
    <scope>NUCLEOTIDE SEQUENCE [MRNA]</scope>
    <source>
        <strain>PCC4</strain>
    </source>
</reference>
<reference key="2">
    <citation type="submission" date="1992-09" db="EMBL/GenBank/DDBJ databases">
        <authorList>
            <person name="Stolzenburg F."/>
        </authorList>
    </citation>
    <scope>SEQUENCE REVISION</scope>
</reference>
<reference key="3">
    <citation type="journal article" date="1995" name="EMBO J.">
        <title>High mobility group protein 2 functionally interacts with the POU domains of octamer transcription factors.</title>
        <authorList>
            <person name="Zwilling S."/>
            <person name="Koenig H."/>
            <person name="Wirth T."/>
        </authorList>
    </citation>
    <scope>NUCLEOTIDE SEQUENCE [MRNA]</scope>
    <scope>FUNCTION</scope>
    <scope>INTERACTION WITH POU2F2; POU2F1 AND POU3F1</scope>
</reference>
<reference key="4">
    <citation type="journal article" date="2001" name="Development">
        <title>Reduced fertility and spermatogenesis defects in mice lacking chromosomal protein Hmgb2.</title>
        <authorList>
            <person name="Ronfani L."/>
            <person name="Ferraguti M."/>
            <person name="Croci L."/>
            <person name="Ovitt C.E."/>
            <person name="Schoeler H.R."/>
            <person name="Consalez G.G."/>
            <person name="Bianchi M.E."/>
        </authorList>
    </citation>
    <scope>NUCLEOTIDE SEQUENCE</scope>
    <scope>FUNCTION</scope>
    <scope>TISSUE SPECIFICITY</scope>
    <scope>DISRUPTION PHENOTYPE</scope>
    <source>
        <strain>129/Sv</strain>
    </source>
</reference>
<reference key="5">
    <citation type="journal article" date="2005" name="Science">
        <title>The transcriptional landscape of the mammalian genome.</title>
        <authorList>
            <person name="Carninci P."/>
            <person name="Kasukawa T."/>
            <person name="Katayama S."/>
            <person name="Gough J."/>
            <person name="Frith M.C."/>
            <person name="Maeda N."/>
            <person name="Oyama R."/>
            <person name="Ravasi T."/>
            <person name="Lenhard B."/>
            <person name="Wells C."/>
            <person name="Kodzius R."/>
            <person name="Shimokawa K."/>
            <person name="Bajic V.B."/>
            <person name="Brenner S.E."/>
            <person name="Batalov S."/>
            <person name="Forrest A.R."/>
            <person name="Zavolan M."/>
            <person name="Davis M.J."/>
            <person name="Wilming L.G."/>
            <person name="Aidinis V."/>
            <person name="Allen J.E."/>
            <person name="Ambesi-Impiombato A."/>
            <person name="Apweiler R."/>
            <person name="Aturaliya R.N."/>
            <person name="Bailey T.L."/>
            <person name="Bansal M."/>
            <person name="Baxter L."/>
            <person name="Beisel K.W."/>
            <person name="Bersano T."/>
            <person name="Bono H."/>
            <person name="Chalk A.M."/>
            <person name="Chiu K.P."/>
            <person name="Choudhary V."/>
            <person name="Christoffels A."/>
            <person name="Clutterbuck D.R."/>
            <person name="Crowe M.L."/>
            <person name="Dalla E."/>
            <person name="Dalrymple B.P."/>
            <person name="de Bono B."/>
            <person name="Della Gatta G."/>
            <person name="di Bernardo D."/>
            <person name="Down T."/>
            <person name="Engstrom P."/>
            <person name="Fagiolini M."/>
            <person name="Faulkner G."/>
            <person name="Fletcher C.F."/>
            <person name="Fukushima T."/>
            <person name="Furuno M."/>
            <person name="Futaki S."/>
            <person name="Gariboldi M."/>
            <person name="Georgii-Hemming P."/>
            <person name="Gingeras T.R."/>
            <person name="Gojobori T."/>
            <person name="Green R.E."/>
            <person name="Gustincich S."/>
            <person name="Harbers M."/>
            <person name="Hayashi Y."/>
            <person name="Hensch T.K."/>
            <person name="Hirokawa N."/>
            <person name="Hill D."/>
            <person name="Huminiecki L."/>
            <person name="Iacono M."/>
            <person name="Ikeo K."/>
            <person name="Iwama A."/>
            <person name="Ishikawa T."/>
            <person name="Jakt M."/>
            <person name="Kanapin A."/>
            <person name="Katoh M."/>
            <person name="Kawasawa Y."/>
            <person name="Kelso J."/>
            <person name="Kitamura H."/>
            <person name="Kitano H."/>
            <person name="Kollias G."/>
            <person name="Krishnan S.P."/>
            <person name="Kruger A."/>
            <person name="Kummerfeld S.K."/>
            <person name="Kurochkin I.V."/>
            <person name="Lareau L.F."/>
            <person name="Lazarevic D."/>
            <person name="Lipovich L."/>
            <person name="Liu J."/>
            <person name="Liuni S."/>
            <person name="McWilliam S."/>
            <person name="Madan Babu M."/>
            <person name="Madera M."/>
            <person name="Marchionni L."/>
            <person name="Matsuda H."/>
            <person name="Matsuzawa S."/>
            <person name="Miki H."/>
            <person name="Mignone F."/>
            <person name="Miyake S."/>
            <person name="Morris K."/>
            <person name="Mottagui-Tabar S."/>
            <person name="Mulder N."/>
            <person name="Nakano N."/>
            <person name="Nakauchi H."/>
            <person name="Ng P."/>
            <person name="Nilsson R."/>
            <person name="Nishiguchi S."/>
            <person name="Nishikawa S."/>
            <person name="Nori F."/>
            <person name="Ohara O."/>
            <person name="Okazaki Y."/>
            <person name="Orlando V."/>
            <person name="Pang K.C."/>
            <person name="Pavan W.J."/>
            <person name="Pavesi G."/>
            <person name="Pesole G."/>
            <person name="Petrovsky N."/>
            <person name="Piazza S."/>
            <person name="Reed J."/>
            <person name="Reid J.F."/>
            <person name="Ring B.Z."/>
            <person name="Ringwald M."/>
            <person name="Rost B."/>
            <person name="Ruan Y."/>
            <person name="Salzberg S.L."/>
            <person name="Sandelin A."/>
            <person name="Schneider C."/>
            <person name="Schoenbach C."/>
            <person name="Sekiguchi K."/>
            <person name="Semple C.A."/>
            <person name="Seno S."/>
            <person name="Sessa L."/>
            <person name="Sheng Y."/>
            <person name="Shibata Y."/>
            <person name="Shimada H."/>
            <person name="Shimada K."/>
            <person name="Silva D."/>
            <person name="Sinclair B."/>
            <person name="Sperling S."/>
            <person name="Stupka E."/>
            <person name="Sugiura K."/>
            <person name="Sultana R."/>
            <person name="Takenaka Y."/>
            <person name="Taki K."/>
            <person name="Tammoja K."/>
            <person name="Tan S.L."/>
            <person name="Tang S."/>
            <person name="Taylor M.S."/>
            <person name="Tegner J."/>
            <person name="Teichmann S.A."/>
            <person name="Ueda H.R."/>
            <person name="van Nimwegen E."/>
            <person name="Verardo R."/>
            <person name="Wei C.L."/>
            <person name="Yagi K."/>
            <person name="Yamanishi H."/>
            <person name="Zabarovsky E."/>
            <person name="Zhu S."/>
            <person name="Zimmer A."/>
            <person name="Hide W."/>
            <person name="Bult C."/>
            <person name="Grimmond S.M."/>
            <person name="Teasdale R.D."/>
            <person name="Liu E.T."/>
            <person name="Brusic V."/>
            <person name="Quackenbush J."/>
            <person name="Wahlestedt C."/>
            <person name="Mattick J.S."/>
            <person name="Hume D.A."/>
            <person name="Kai C."/>
            <person name="Sasaki D."/>
            <person name="Tomaru Y."/>
            <person name="Fukuda S."/>
            <person name="Kanamori-Katayama M."/>
            <person name="Suzuki M."/>
            <person name="Aoki J."/>
            <person name="Arakawa T."/>
            <person name="Iida J."/>
            <person name="Imamura K."/>
            <person name="Itoh M."/>
            <person name="Kato T."/>
            <person name="Kawaji H."/>
            <person name="Kawagashira N."/>
            <person name="Kawashima T."/>
            <person name="Kojima M."/>
            <person name="Kondo S."/>
            <person name="Konno H."/>
            <person name="Nakano K."/>
            <person name="Ninomiya N."/>
            <person name="Nishio T."/>
            <person name="Okada M."/>
            <person name="Plessy C."/>
            <person name="Shibata K."/>
            <person name="Shiraki T."/>
            <person name="Suzuki S."/>
            <person name="Tagami M."/>
            <person name="Waki K."/>
            <person name="Watahiki A."/>
            <person name="Okamura-Oho Y."/>
            <person name="Suzuki H."/>
            <person name="Kawai J."/>
            <person name="Hayashizaki Y."/>
        </authorList>
    </citation>
    <scope>NUCLEOTIDE SEQUENCE [LARGE SCALE MRNA]</scope>
    <source>
        <strain>C57BL/6J</strain>
        <strain>DBA/2J</strain>
        <tissue>Small intestine</tissue>
        <tissue>Wolffian duct</tissue>
    </source>
</reference>
<reference key="6">
    <citation type="journal article" date="2004" name="Genome Res.">
        <title>The status, quality, and expansion of the NIH full-length cDNA project: the Mammalian Gene Collection (MGC).</title>
        <authorList>
            <consortium name="The MGC Project Team"/>
        </authorList>
    </citation>
    <scope>NUCLEOTIDE SEQUENCE [LARGE SCALE MRNA]</scope>
    <source>
        <strain>C57BL/6J</strain>
        <strain>FVB/N</strain>
        <tissue>Brain</tissue>
        <tissue>Mammary gland</tissue>
    </source>
</reference>
<reference key="7">
    <citation type="journal article" date="1997" name="EMBO J.">
        <title>Stimulation of V(D)J cleavage by high mobility group proteins.</title>
        <authorList>
            <person name="van Gent D.C."/>
            <person name="Hiom K."/>
            <person name="Paull T.T."/>
            <person name="Gellert M."/>
        </authorList>
    </citation>
    <scope>FUNCTION</scope>
    <scope>IDENTIFICATION IN THE RAG COMPLEX</scope>
</reference>
<reference key="8">
    <citation type="journal article" date="2009" name="Nature">
        <title>HMGB proteins function as universal sentinels for nucleic-acid-mediated innate immune responses.</title>
        <authorList>
            <person name="Yanai H."/>
            <person name="Ban T."/>
            <person name="Wang Z."/>
            <person name="Choi M.K."/>
            <person name="Kawamura T."/>
            <person name="Negishi H."/>
            <person name="Nakasato M."/>
            <person name="Lu Y."/>
            <person name="Hangai S."/>
            <person name="Koshiba R."/>
            <person name="Savitsky D."/>
            <person name="Ronfani L."/>
            <person name="Akira S."/>
            <person name="Bianchi M.E."/>
            <person name="Honda K."/>
            <person name="Tamura T."/>
            <person name="Kodama T."/>
            <person name="Taniguchi T."/>
        </authorList>
    </citation>
    <scope>FUNCTION</scope>
    <scope>SUBCELLULAR LOCATION</scope>
</reference>
<reference key="9">
    <citation type="journal article" date="2009" name="Proc. Natl. Acad. Sci. U.S.A.">
        <title>Chromatin protein HMGB2 regulates articular cartilage surface maintenance via beta-catenin pathway.</title>
        <authorList>
            <person name="Taniguchi N."/>
            <person name="Carames B."/>
            <person name="Kawakami Y."/>
            <person name="Amendt B.A."/>
            <person name="Komiya S."/>
            <person name="Lotz M."/>
        </authorList>
    </citation>
    <scope>FUNCTION</scope>
    <scope>INTERACTION WITH LEF1</scope>
    <scope>TISSUE SPECIFICITY</scope>
</reference>
<reference key="10">
    <citation type="journal article" date="2010" name="Cell">
        <title>A tissue-specific atlas of mouse protein phosphorylation and expression.</title>
        <authorList>
            <person name="Huttlin E.L."/>
            <person name="Jedrychowski M.P."/>
            <person name="Elias J.E."/>
            <person name="Goswami T."/>
            <person name="Rad R."/>
            <person name="Beausoleil S.A."/>
            <person name="Villen J."/>
            <person name="Haas W."/>
            <person name="Sowa M.E."/>
            <person name="Gygi S.P."/>
        </authorList>
    </citation>
    <scope>IDENTIFICATION BY MASS SPECTROMETRY [LARGE SCALE ANALYSIS]</scope>
    <source>
        <tissue>Brain</tissue>
        <tissue>Brown adipose tissue</tissue>
        <tissue>Heart</tissue>
        <tissue>Kidney</tissue>
        <tissue>Liver</tissue>
        <tissue>Lung</tissue>
        <tissue>Pancreas</tissue>
        <tissue>Spleen</tissue>
        <tissue>Testis</tissue>
    </source>
</reference>
<reference key="11">
    <citation type="journal article" date="2013" name="Mol. Cell">
        <title>SIRT5-mediated lysine desuccinylation impacts diverse metabolic pathways.</title>
        <authorList>
            <person name="Park J."/>
            <person name="Chen Y."/>
            <person name="Tishkoff D.X."/>
            <person name="Peng C."/>
            <person name="Tan M."/>
            <person name="Dai L."/>
            <person name="Xie Z."/>
            <person name="Zhang Y."/>
            <person name="Zwaans B.M."/>
            <person name="Skinner M.E."/>
            <person name="Lombard D.B."/>
            <person name="Zhao Y."/>
        </authorList>
    </citation>
    <scope>ACETYLATION [LARGE SCALE ANALYSIS] AT LYS-30 AND LYS-114</scope>
    <scope>IDENTIFICATION BY MASS SPECTROMETRY [LARGE SCALE ANALYSIS]</scope>
    <source>
        <tissue>Embryonic fibroblast</tissue>
    </source>
</reference>
<reference key="12">
    <citation type="journal article" date="2013" name="PLoS ONE">
        <title>Aberrant neural stem cell proliferation and increased adult neurogenesis in mice lacking chromatin protein HMGB2.</title>
        <authorList>
            <person name="Abraham A.B."/>
            <person name="Bronstein R."/>
            <person name="Reddy A.S."/>
            <person name="Maletic-Savatic M."/>
            <person name="Aguirre A."/>
            <person name="Tsirka S.E."/>
        </authorList>
    </citation>
    <scope>FUNCTION</scope>
</reference>
<reference key="13">
    <citation type="journal article" date="2013" name="Stem Cells">
        <title>Oct4 interaction with Hmgb2 regulates Akt signaling and pluripotency.</title>
        <authorList>
            <person name="Campbell P.A."/>
            <person name="Rudnicki M.A."/>
        </authorList>
    </citation>
    <scope>FUNCTION</scope>
</reference>
<reference key="14">
    <citation type="journal article" date="2014" name="Nat. Chem. Biol.">
        <title>A small molecule binding HMGB1 and HMGB2 inhibits microglia-mediated neuroinflammation.</title>
        <authorList>
            <person name="Lee S."/>
            <person name="Nam Y."/>
            <person name="Koo J.Y."/>
            <person name="Lim D."/>
            <person name="Park J."/>
            <person name="Ock J."/>
            <person name="Kim J."/>
            <person name="Suk K."/>
            <person name="Park S.B."/>
        </authorList>
    </citation>
    <scope>FUNCTION</scope>
</reference>
<evidence type="ECO:0000250" key="1">
    <source>
        <dbReference type="UniProtKB" id="P09429"/>
    </source>
</evidence>
<evidence type="ECO:0000250" key="2">
    <source>
        <dbReference type="UniProtKB" id="P26583"/>
    </source>
</evidence>
<evidence type="ECO:0000250" key="3">
    <source>
        <dbReference type="UniProtKB" id="P63158"/>
    </source>
</evidence>
<evidence type="ECO:0000250" key="4">
    <source>
        <dbReference type="UniProtKB" id="P63159"/>
    </source>
</evidence>
<evidence type="ECO:0000255" key="5">
    <source>
        <dbReference type="PROSITE-ProRule" id="PRU00267"/>
    </source>
</evidence>
<evidence type="ECO:0000256" key="6">
    <source>
        <dbReference type="SAM" id="MobiDB-lite"/>
    </source>
</evidence>
<evidence type="ECO:0000269" key="7">
    <source>
    </source>
</evidence>
<evidence type="ECO:0000269" key="8">
    <source>
    </source>
</evidence>
<evidence type="ECO:0000269" key="9">
    <source>
    </source>
</evidence>
<evidence type="ECO:0000269" key="10">
    <source>
    </source>
</evidence>
<evidence type="ECO:0000269" key="11">
    <source>
    </source>
</evidence>
<evidence type="ECO:0000269" key="12">
    <source>
    </source>
</evidence>
<evidence type="ECO:0000269" key="13">
    <source>
    </source>
</evidence>
<evidence type="ECO:0000269" key="14">
    <source>
    </source>
</evidence>
<evidence type="ECO:0000305" key="15"/>
<evidence type="ECO:0000305" key="16">
    <source>
    </source>
</evidence>
<evidence type="ECO:0007744" key="17">
    <source>
    </source>
</evidence>
<comment type="function">
    <text evidence="1 2 8 9 10 11 12 14 16">Multifunctional protein with various roles in different cellular compartments. May act in a redox sensitive manner. In the nucleus is an abundant chromatin-associated non-histone protein involved in transcription, chromatin remodeling and V(D)J recombination and probably other processes. Binds DNA with a preference to non-canonical DNA structures such as single-stranded DNA. Can bent DNA and enhance DNA flexibility by looping thus providing a mechanism to promote activities on various gene promoters by enhancing transcription factor binding and/or bringing distant regulatory sequences into close proximity (By similarity). Involved in V(D)J recombination by acting as a cofactor of the RAG complex: acts by stimulating cleavage and RAG protein binding at the 23 bp spacer of conserved recombination signal sequences (RSS) (PubMed:9184213). Proposed to be involved in the innate immune response to nucleic acids by acting as a cytoplasmic promiscuous immunogenic DNA/RNA sensor which cooperates with subsequent discriminative sensing by specific pattern recognition receptors (PubMed:19890330). In the extracellular compartment acts as a chemokine. Promotes proliferation and migration of endothelial cells implicating AGER/RAGE (By similarity). Has antimicrobial activity in gastrointestinal epithelial tissues (By similarity). Involved in inflammatory response to antigenic stimulus coupled with pro-inflammatory activity (PubMed:25306442). May play a role in germ cell differentiation (PubMed:11262228). Involved in modulation of neurogenesis probably by regulation of neural stem proliferation (PubMed:24391977). Involved in articular cartilage surface maintenance implicating LEF1 and the Wnt/beta-catenin pathway (PubMed:19805379).</text>
</comment>
<comment type="subunit">
    <text evidence="2 8 13 14">Interacts with POU2F2, POU2F1 and POU3F1 (PubMed:7720710). Component of the RAG complex composed of core components RAG1 and RAG2, and associated component HMGB1 or HMGB2 (PubMed:9184213). Component of the SET complex, composed of at least ANP32A, APEX1, HMGB2, NME1, SET and TREX1. Directly interacts with SET (By similarity). Interacts with LEF1 (PubMed:19805379).</text>
</comment>
<comment type="interaction">
    <interactant intactId="EBI-6910056">
        <id>P30681</id>
    </interactant>
    <interactant intactId="EBI-984464">
        <id>P27782</id>
        <label>Lef1</label>
    </interactant>
    <organismsDiffer>false</organismsDiffer>
    <experiments>2</experiments>
</comment>
<comment type="subcellular location">
    <subcellularLocation>
        <location evidence="1">Nucleus</location>
    </subcellularLocation>
    <subcellularLocation>
        <location evidence="2">Chromosome</location>
    </subcellularLocation>
    <subcellularLocation>
        <location evidence="9">Cytoplasm</location>
    </subcellularLocation>
    <subcellularLocation>
        <location evidence="2">Secreted</location>
    </subcellularLocation>
</comment>
<comment type="tissue specificity">
    <text evidence="7 8">Widely expressed in embryo. In adult mainly expressed in lymphoid organs and testes (PubMed:11262228). Expressed in primary spermatocytes. Expressed in the superficial zone of articular cartilage (PubMed:19805379).</text>
</comment>
<comment type="domain">
    <text evidence="2">Both, HMG box 1 and HMG box 2, show antimicrobial activity.</text>
</comment>
<comment type="PTM">
    <text evidence="1">Reduction/oxidation of cysteine residues Cys-23, Cys-45 and Cys-106 and a possible intramolecular disulfide bond involving Cys-23 and Cys-45 give rise to different redox forms with specific functional activities in various cellular compartments: 1- fully reduced HMGB2 (HMGB2C23hC45hC106h), 2- disulfide HMGB2 (HMGB2C23-C45C106h) and 3- sulfonyl HMGB2 (HMGB2C23soC45soC106so).</text>
</comment>
<comment type="disruption phenotype">
    <text evidence="7">Viable, with severe reduction of sperm production in males.</text>
</comment>
<comment type="similarity">
    <text evidence="15">Belongs to the HMGB family.</text>
</comment>
<accession>P30681</accession>
<accession>Q3UXT1</accession>
<accession>Q9EQD5</accession>
<dbReference type="EMBL" id="X67668">
    <property type="protein sequence ID" value="CAA47900.1"/>
    <property type="molecule type" value="mRNA"/>
</dbReference>
<dbReference type="EMBL" id="Z46757">
    <property type="protein sequence ID" value="CAA86727.1"/>
    <property type="molecule type" value="mRNA"/>
</dbReference>
<dbReference type="EMBL" id="AF267733">
    <property type="protein sequence ID" value="AAG36939.1"/>
    <property type="molecule type" value="Genomic_DNA"/>
</dbReference>
<dbReference type="EMBL" id="AK003773">
    <property type="protein sequence ID" value="BAB22988.1"/>
    <property type="molecule type" value="mRNA"/>
</dbReference>
<dbReference type="EMBL" id="AK008443">
    <property type="protein sequence ID" value="BAB25672.1"/>
    <property type="molecule type" value="mRNA"/>
</dbReference>
<dbReference type="EMBL" id="AK012568">
    <property type="protein sequence ID" value="BAB28323.1"/>
    <property type="molecule type" value="mRNA"/>
</dbReference>
<dbReference type="EMBL" id="AK135296">
    <property type="protein sequence ID" value="BAE22481.1"/>
    <property type="molecule type" value="mRNA"/>
</dbReference>
<dbReference type="EMBL" id="AK135297">
    <property type="protein sequence ID" value="BAE22482.1"/>
    <property type="molecule type" value="mRNA"/>
</dbReference>
<dbReference type="EMBL" id="AK146212">
    <property type="protein sequence ID" value="BAE26982.1"/>
    <property type="molecule type" value="mRNA"/>
</dbReference>
<dbReference type="EMBL" id="BC002050">
    <property type="protein sequence ID" value="AAH02050.1"/>
    <property type="molecule type" value="mRNA"/>
</dbReference>
<dbReference type="EMBL" id="BC046759">
    <property type="protein sequence ID" value="AAH46759.1"/>
    <property type="molecule type" value="mRNA"/>
</dbReference>
<dbReference type="EMBL" id="BC083108">
    <property type="protein sequence ID" value="AAH83108.1"/>
    <property type="molecule type" value="mRNA"/>
</dbReference>
<dbReference type="CCDS" id="CCDS40343.1"/>
<dbReference type="PIR" id="S26062">
    <property type="entry name" value="S26062"/>
</dbReference>
<dbReference type="PIR" id="S54774">
    <property type="entry name" value="S54774"/>
</dbReference>
<dbReference type="RefSeq" id="NP_001350372.1">
    <property type="nucleotide sequence ID" value="NM_001363443.1"/>
</dbReference>
<dbReference type="RefSeq" id="NP_001350373.1">
    <property type="nucleotide sequence ID" value="NM_001363444.1"/>
</dbReference>
<dbReference type="RefSeq" id="NP_001350374.1">
    <property type="nucleotide sequence ID" value="NM_001363445.1"/>
</dbReference>
<dbReference type="RefSeq" id="NP_032278.1">
    <property type="nucleotide sequence ID" value="NM_008252.3"/>
</dbReference>
<dbReference type="RefSeq" id="XP_006509587.1">
    <property type="nucleotide sequence ID" value="XM_006509524.2"/>
</dbReference>
<dbReference type="SMR" id="P30681"/>
<dbReference type="BioGRID" id="220633">
    <property type="interactions" value="14"/>
</dbReference>
<dbReference type="DIP" id="DIP-899N"/>
<dbReference type="FunCoup" id="P30681">
    <property type="interactions" value="3023"/>
</dbReference>
<dbReference type="IntAct" id="P30681">
    <property type="interactions" value="5"/>
</dbReference>
<dbReference type="MINT" id="P30681"/>
<dbReference type="STRING" id="10090.ENSMUSP00000065940"/>
<dbReference type="GlyGen" id="P30681">
    <property type="glycosylation" value="1 site, 1 O-linked glycan (1 site)"/>
</dbReference>
<dbReference type="iPTMnet" id="P30681"/>
<dbReference type="PhosphoSitePlus" id="P30681"/>
<dbReference type="SwissPalm" id="P30681"/>
<dbReference type="CPTAC" id="non-CPTAC-3820"/>
<dbReference type="jPOST" id="P30681"/>
<dbReference type="PaxDb" id="10090-ENSMUSP00000065940"/>
<dbReference type="PeptideAtlas" id="P30681"/>
<dbReference type="ProteomicsDB" id="267052"/>
<dbReference type="Pumba" id="P30681"/>
<dbReference type="Antibodypedia" id="1112">
    <property type="antibodies" value="403 antibodies from 35 providers"/>
</dbReference>
<dbReference type="DNASU" id="97165"/>
<dbReference type="Ensembl" id="ENSMUST00000067925.8">
    <property type="protein sequence ID" value="ENSMUSP00000065940.7"/>
    <property type="gene ID" value="ENSMUSG00000054717.8"/>
</dbReference>
<dbReference type="GeneID" id="97165"/>
<dbReference type="KEGG" id="mmu:97165"/>
<dbReference type="UCSC" id="uc009lsx.2">
    <property type="organism name" value="mouse"/>
</dbReference>
<dbReference type="AGR" id="MGI:96157"/>
<dbReference type="CTD" id="3148"/>
<dbReference type="MGI" id="MGI:96157">
    <property type="gene designation" value="Hmgb2"/>
</dbReference>
<dbReference type="VEuPathDB" id="HostDB:ENSMUSG00000054717"/>
<dbReference type="eggNOG" id="KOG0381">
    <property type="taxonomic scope" value="Eukaryota"/>
</dbReference>
<dbReference type="GeneTree" id="ENSGT00940000154466"/>
<dbReference type="HOGENOM" id="CLU_082854_0_0_1"/>
<dbReference type="InParanoid" id="P30681"/>
<dbReference type="OMA" id="SHAFFGQ"/>
<dbReference type="OrthoDB" id="1919336at2759"/>
<dbReference type="PhylomeDB" id="P30681"/>
<dbReference type="TreeFam" id="TF105371"/>
<dbReference type="Reactome" id="R-MMU-140342">
    <property type="pathway name" value="Apoptosis induced DNA fragmentation"/>
</dbReference>
<dbReference type="BioGRID-ORCS" id="97165">
    <property type="hits" value="10 hits in 77 CRISPR screens"/>
</dbReference>
<dbReference type="ChiTaRS" id="Hmgb2">
    <property type="organism name" value="mouse"/>
</dbReference>
<dbReference type="PRO" id="PR:P30681"/>
<dbReference type="Proteomes" id="UP000000589">
    <property type="component" value="Chromosome 8"/>
</dbReference>
<dbReference type="RNAct" id="P30681">
    <property type="molecule type" value="protein"/>
</dbReference>
<dbReference type="Bgee" id="ENSMUSG00000054717">
    <property type="expression patterns" value="Expressed in embryonic post-anal tail and 186 other cell types or tissues"/>
</dbReference>
<dbReference type="ExpressionAtlas" id="P30681">
    <property type="expression patterns" value="baseline and differential"/>
</dbReference>
<dbReference type="GO" id="GO:0000785">
    <property type="term" value="C:chromatin"/>
    <property type="evidence" value="ECO:0000314"/>
    <property type="project" value="AgBase"/>
</dbReference>
<dbReference type="GO" id="GO:0000793">
    <property type="term" value="C:condensed chromosome"/>
    <property type="evidence" value="ECO:0000250"/>
    <property type="project" value="UniProtKB"/>
</dbReference>
<dbReference type="GO" id="GO:0005737">
    <property type="term" value="C:cytoplasm"/>
    <property type="evidence" value="ECO:0000314"/>
    <property type="project" value="AgBase"/>
</dbReference>
<dbReference type="GO" id="GO:0005615">
    <property type="term" value="C:extracellular space"/>
    <property type="evidence" value="ECO:0000314"/>
    <property type="project" value="AgBase"/>
</dbReference>
<dbReference type="GO" id="GO:0005730">
    <property type="term" value="C:nucleolus"/>
    <property type="evidence" value="ECO:0007669"/>
    <property type="project" value="Ensembl"/>
</dbReference>
<dbReference type="GO" id="GO:0005654">
    <property type="term" value="C:nucleoplasm"/>
    <property type="evidence" value="ECO:0007669"/>
    <property type="project" value="Ensembl"/>
</dbReference>
<dbReference type="GO" id="GO:0005634">
    <property type="term" value="C:nucleus"/>
    <property type="evidence" value="ECO:0000314"/>
    <property type="project" value="AgBase"/>
</dbReference>
<dbReference type="GO" id="GO:0048471">
    <property type="term" value="C:perinuclear region of cytoplasm"/>
    <property type="evidence" value="ECO:0000250"/>
    <property type="project" value="UniProtKB"/>
</dbReference>
<dbReference type="GO" id="GO:0032991">
    <property type="term" value="C:protein-containing complex"/>
    <property type="evidence" value="ECO:0007669"/>
    <property type="project" value="Ensembl"/>
</dbReference>
<dbReference type="GO" id="GO:0042056">
    <property type="term" value="F:chemoattractant activity"/>
    <property type="evidence" value="ECO:0007669"/>
    <property type="project" value="Ensembl"/>
</dbReference>
<dbReference type="GO" id="GO:0000987">
    <property type="term" value="F:cis-regulatory region sequence-specific DNA binding"/>
    <property type="evidence" value="ECO:0000314"/>
    <property type="project" value="AgBase"/>
</dbReference>
<dbReference type="GO" id="GO:0003684">
    <property type="term" value="F:damaged DNA binding"/>
    <property type="evidence" value="ECO:0007669"/>
    <property type="project" value="Ensembl"/>
</dbReference>
<dbReference type="GO" id="GO:0003677">
    <property type="term" value="F:DNA binding"/>
    <property type="evidence" value="ECO:0000250"/>
    <property type="project" value="AgBase"/>
</dbReference>
<dbReference type="GO" id="GO:0008301">
    <property type="term" value="F:DNA binding, bending"/>
    <property type="evidence" value="ECO:0000250"/>
    <property type="project" value="UniProtKB"/>
</dbReference>
<dbReference type="GO" id="GO:0140297">
    <property type="term" value="F:DNA-binding transcription factor binding"/>
    <property type="evidence" value="ECO:0000353"/>
    <property type="project" value="UniProtKB"/>
</dbReference>
<dbReference type="GO" id="GO:0003690">
    <property type="term" value="F:double-stranded DNA binding"/>
    <property type="evidence" value="ECO:0000314"/>
    <property type="project" value="UniProtKB"/>
</dbReference>
<dbReference type="GO" id="GO:0044378">
    <property type="term" value="F:non-sequence-specific DNA binding, bending"/>
    <property type="evidence" value="ECO:0000250"/>
    <property type="project" value="AgBase"/>
</dbReference>
<dbReference type="GO" id="GO:0019904">
    <property type="term" value="F:protein domain specific binding"/>
    <property type="evidence" value="ECO:0000353"/>
    <property type="project" value="MGI"/>
</dbReference>
<dbReference type="GO" id="GO:0050786">
    <property type="term" value="F:RAGE receptor binding"/>
    <property type="evidence" value="ECO:0007669"/>
    <property type="project" value="Ensembl"/>
</dbReference>
<dbReference type="GO" id="GO:0097100">
    <property type="term" value="F:supercoiled DNA binding"/>
    <property type="evidence" value="ECO:0000250"/>
    <property type="project" value="AgBase"/>
</dbReference>
<dbReference type="GO" id="GO:0003713">
    <property type="term" value="F:transcription coactivator activity"/>
    <property type="evidence" value="ECO:0007669"/>
    <property type="project" value="Ensembl"/>
</dbReference>
<dbReference type="GO" id="GO:0008134">
    <property type="term" value="F:transcription factor binding"/>
    <property type="evidence" value="ECO:0000314"/>
    <property type="project" value="AgBase"/>
</dbReference>
<dbReference type="GO" id="GO:0060326">
    <property type="term" value="P:cell chemotaxis"/>
    <property type="evidence" value="ECO:0007669"/>
    <property type="project" value="Ensembl"/>
</dbReference>
<dbReference type="GO" id="GO:0071222">
    <property type="term" value="P:cellular response to lipopolysaccharide"/>
    <property type="evidence" value="ECO:0007669"/>
    <property type="project" value="Ensembl"/>
</dbReference>
<dbReference type="GO" id="GO:0050829">
    <property type="term" value="P:defense response to Gram-negative bacterium"/>
    <property type="evidence" value="ECO:0000250"/>
    <property type="project" value="AgBase"/>
</dbReference>
<dbReference type="GO" id="GO:0050830">
    <property type="term" value="P:defense response to Gram-positive bacterium"/>
    <property type="evidence" value="ECO:0000250"/>
    <property type="project" value="AgBase"/>
</dbReference>
<dbReference type="GO" id="GO:0006310">
    <property type="term" value="P:DNA recombination"/>
    <property type="evidence" value="ECO:0007669"/>
    <property type="project" value="UniProtKB-KW"/>
</dbReference>
<dbReference type="GO" id="GO:0006265">
    <property type="term" value="P:DNA topological change"/>
    <property type="evidence" value="ECO:0000250"/>
    <property type="project" value="AgBase"/>
</dbReference>
<dbReference type="GO" id="GO:0008625">
    <property type="term" value="P:extrinsic apoptotic signaling pathway via death domain receptors"/>
    <property type="evidence" value="ECO:0000315"/>
    <property type="project" value="MGI"/>
</dbReference>
<dbReference type="GO" id="GO:0002437">
    <property type="term" value="P:inflammatory response to antigenic stimulus"/>
    <property type="evidence" value="ECO:0000315"/>
    <property type="project" value="AgBase"/>
</dbReference>
<dbReference type="GO" id="GO:0045087">
    <property type="term" value="P:innate immune response"/>
    <property type="evidence" value="ECO:0007669"/>
    <property type="project" value="UniProtKB-KW"/>
</dbReference>
<dbReference type="GO" id="GO:0008584">
    <property type="term" value="P:male gonad development"/>
    <property type="evidence" value="ECO:0000315"/>
    <property type="project" value="MGI"/>
</dbReference>
<dbReference type="GO" id="GO:1902042">
    <property type="term" value="P:negative regulation of extrinsic apoptotic signaling pathway via death domain receptors"/>
    <property type="evidence" value="ECO:0000315"/>
    <property type="project" value="MGI"/>
</dbReference>
<dbReference type="GO" id="GO:0010629">
    <property type="term" value="P:negative regulation of gene expression"/>
    <property type="evidence" value="ECO:0000314"/>
    <property type="project" value="AgBase"/>
</dbReference>
<dbReference type="GO" id="GO:0000122">
    <property type="term" value="P:negative regulation of transcription by RNA polymerase II"/>
    <property type="evidence" value="ECO:0007669"/>
    <property type="project" value="Ensembl"/>
</dbReference>
<dbReference type="GO" id="GO:0001938">
    <property type="term" value="P:positive regulation of endothelial cell proliferation"/>
    <property type="evidence" value="ECO:0007669"/>
    <property type="project" value="Ensembl"/>
</dbReference>
<dbReference type="GO" id="GO:0045648">
    <property type="term" value="P:positive regulation of erythrocyte differentiation"/>
    <property type="evidence" value="ECO:0007669"/>
    <property type="project" value="Ensembl"/>
</dbReference>
<dbReference type="GO" id="GO:0010628">
    <property type="term" value="P:positive regulation of gene expression"/>
    <property type="evidence" value="ECO:0000314"/>
    <property type="project" value="AgBase"/>
</dbReference>
<dbReference type="GO" id="GO:0045089">
    <property type="term" value="P:positive regulation of innate immune response"/>
    <property type="evidence" value="ECO:0000315"/>
    <property type="project" value="UniProtKB"/>
</dbReference>
<dbReference type="GO" id="GO:0032728">
    <property type="term" value="P:positive regulation of interferon-beta production"/>
    <property type="evidence" value="ECO:0000315"/>
    <property type="project" value="UniProtKB"/>
</dbReference>
<dbReference type="GO" id="GO:0045654">
    <property type="term" value="P:positive regulation of megakaryocyte differentiation"/>
    <property type="evidence" value="ECO:0007669"/>
    <property type="project" value="Ensembl"/>
</dbReference>
<dbReference type="GO" id="GO:0045944">
    <property type="term" value="P:positive regulation of transcription by RNA polymerase II"/>
    <property type="evidence" value="ECO:0000315"/>
    <property type="project" value="MGI"/>
</dbReference>
<dbReference type="GO" id="GO:0050767">
    <property type="term" value="P:regulation of neurogenesis"/>
    <property type="evidence" value="ECO:0000315"/>
    <property type="project" value="AgBase"/>
</dbReference>
<dbReference type="GO" id="GO:0072091">
    <property type="term" value="P:regulation of stem cell proliferation"/>
    <property type="evidence" value="ECO:0000315"/>
    <property type="project" value="AgBase"/>
</dbReference>
<dbReference type="GO" id="GO:0006357">
    <property type="term" value="P:regulation of transcription by RNA polymerase II"/>
    <property type="evidence" value="ECO:0000314"/>
    <property type="project" value="MGI"/>
</dbReference>
<dbReference type="GO" id="GO:0032496">
    <property type="term" value="P:response to lipopolysaccharide"/>
    <property type="evidence" value="ECO:0000315"/>
    <property type="project" value="AgBase"/>
</dbReference>
<dbReference type="GO" id="GO:0048545">
    <property type="term" value="P:response to steroid hormone"/>
    <property type="evidence" value="ECO:0000315"/>
    <property type="project" value="MGI"/>
</dbReference>
<dbReference type="GO" id="GO:0007289">
    <property type="term" value="P:spermatid nucleus differentiation"/>
    <property type="evidence" value="ECO:0000315"/>
    <property type="project" value="MGI"/>
</dbReference>
<dbReference type="GO" id="GO:0007283">
    <property type="term" value="P:spermatogenesis"/>
    <property type="evidence" value="ECO:0000315"/>
    <property type="project" value="MGI"/>
</dbReference>
<dbReference type="CDD" id="cd21978">
    <property type="entry name" value="HMG-box_HMGB_rpt1"/>
    <property type="match status" value="1"/>
</dbReference>
<dbReference type="CDD" id="cd21979">
    <property type="entry name" value="HMG-box_HMGB_rpt2"/>
    <property type="match status" value="1"/>
</dbReference>
<dbReference type="FunFam" id="1.10.30.10:FF:000006">
    <property type="entry name" value="High mobility group protein B1"/>
    <property type="match status" value="1"/>
</dbReference>
<dbReference type="FunFam" id="1.10.30.10:FF:000018">
    <property type="entry name" value="High mobility group protein B2"/>
    <property type="match status" value="1"/>
</dbReference>
<dbReference type="Gene3D" id="1.10.30.10">
    <property type="entry name" value="High mobility group box domain"/>
    <property type="match status" value="2"/>
</dbReference>
<dbReference type="InterPro" id="IPR009071">
    <property type="entry name" value="HMG_box_dom"/>
</dbReference>
<dbReference type="InterPro" id="IPR036910">
    <property type="entry name" value="HMG_box_dom_sf"/>
</dbReference>
<dbReference type="InterPro" id="IPR017967">
    <property type="entry name" value="HMG_boxA_CS"/>
</dbReference>
<dbReference type="InterPro" id="IPR050342">
    <property type="entry name" value="HMGB"/>
</dbReference>
<dbReference type="PANTHER" id="PTHR48112:SF3">
    <property type="entry name" value="HIGH MOBILITY GROUP PROTEIN B2"/>
    <property type="match status" value="1"/>
</dbReference>
<dbReference type="PANTHER" id="PTHR48112">
    <property type="entry name" value="HIGH MOBILITY GROUP PROTEIN DSP1"/>
    <property type="match status" value="1"/>
</dbReference>
<dbReference type="Pfam" id="PF00505">
    <property type="entry name" value="HMG_box"/>
    <property type="match status" value="1"/>
</dbReference>
<dbReference type="Pfam" id="PF09011">
    <property type="entry name" value="HMG_box_2"/>
    <property type="match status" value="1"/>
</dbReference>
<dbReference type="PRINTS" id="PR00886">
    <property type="entry name" value="HIGHMOBLTY12"/>
</dbReference>
<dbReference type="SMART" id="SM00398">
    <property type="entry name" value="HMG"/>
    <property type="match status" value="2"/>
</dbReference>
<dbReference type="SUPFAM" id="SSF47095">
    <property type="entry name" value="HMG-box"/>
    <property type="match status" value="2"/>
</dbReference>
<dbReference type="PROSITE" id="PS00353">
    <property type="entry name" value="HMG_BOX_1"/>
    <property type="match status" value="1"/>
</dbReference>
<dbReference type="PROSITE" id="PS50118">
    <property type="entry name" value="HMG_BOX_2"/>
    <property type="match status" value="2"/>
</dbReference>
<feature type="chain" id="PRO_0000048535" description="High mobility group protein B2">
    <location>
        <begin position="1"/>
        <end position="210"/>
    </location>
</feature>
<feature type="DNA-binding region" description="HMG box 1" evidence="5">
    <location>
        <begin position="9"/>
        <end position="79"/>
    </location>
</feature>
<feature type="DNA-binding region" description="HMG box 2" evidence="5">
    <location>
        <begin position="95"/>
        <end position="163"/>
    </location>
</feature>
<feature type="region of interest" description="Disordered" evidence="6">
    <location>
        <begin position="71"/>
        <end position="102"/>
    </location>
</feature>
<feature type="region of interest" description="Disordered" evidence="6">
    <location>
        <begin position="162"/>
        <end position="210"/>
    </location>
</feature>
<feature type="region of interest" description="Required for chemotactic activity" evidence="2">
    <location>
        <begin position="165"/>
        <end position="180"/>
    </location>
</feature>
<feature type="compositionally biased region" description="Basic and acidic residues" evidence="6">
    <location>
        <begin position="162"/>
        <end position="172"/>
    </location>
</feature>
<feature type="compositionally biased region" description="Acidic residues" evidence="6">
    <location>
        <begin position="187"/>
        <end position="210"/>
    </location>
</feature>
<feature type="modified residue" description="N6-acetyllysine" evidence="4">
    <location>
        <position position="3"/>
    </location>
</feature>
<feature type="modified residue" description="Cysteine sulfonic acid (-SO3H); alternate" evidence="4">
    <location>
        <position position="23"/>
    </location>
</feature>
<feature type="modified residue" description="N6-acetyllysine" evidence="17">
    <location>
        <position position="30"/>
    </location>
</feature>
<feature type="modified residue" description="Phosphoserine" evidence="2">
    <location>
        <position position="35"/>
    </location>
</feature>
<feature type="modified residue" description="N6-acetyllysine" evidence="3">
    <location>
        <position position="43"/>
    </location>
</feature>
<feature type="modified residue" description="Cysteine sulfonic acid (-SO3H); alternate" evidence="4">
    <location>
        <position position="45"/>
    </location>
</feature>
<feature type="modified residue" description="N6-acetyllysine" evidence="3">
    <location>
        <position position="90"/>
    </location>
</feature>
<feature type="modified residue" description="Phosphoserine" evidence="1">
    <location>
        <position position="100"/>
    </location>
</feature>
<feature type="modified residue" description="Cysteine sulfonic acid (-SO3H)" evidence="4">
    <location>
        <position position="106"/>
    </location>
</feature>
<feature type="modified residue" description="N6-acetyllysine" evidence="17">
    <location>
        <position position="114"/>
    </location>
</feature>
<feature type="modified residue" description="N6-acetyllysine" evidence="3">
    <location>
        <position position="141"/>
    </location>
</feature>
<feature type="disulfide bond" description="In disulfide HMGB2; alternate" evidence="4">
    <location>
        <begin position="23"/>
        <end position="45"/>
    </location>
</feature>
<feature type="sequence conflict" description="In Ref. 1; CAA47900." evidence="15" ref="1">
    <original>N</original>
    <variation>I</variation>
    <location>
        <position position="7"/>
    </location>
</feature>
<feature type="sequence conflict" description="In Ref. 1; CAA47900." evidence="15" ref="1">
    <original>R</original>
    <variation>L</variation>
    <location>
        <position position="10"/>
    </location>
</feature>
<feature type="sequence conflict" description="In Ref. 1; CAA47900." evidence="15" ref="1">
    <original>D</original>
    <variation>N</variation>
    <location>
        <position position="33"/>
    </location>
</feature>
<feature type="sequence conflict" description="In Ref. 1; CAA47900." evidence="15" ref="1">
    <original>F</original>
    <variation>I</variation>
    <location>
        <position position="41"/>
    </location>
</feature>
<feature type="sequence conflict" description="In Ref. 1; CAA47900." evidence="15" ref="1">
    <original>E</original>
    <variation>K</variation>
    <location>
        <position position="47"/>
    </location>
</feature>
<feature type="sequence conflict" description="In Ref. 1; CAA47900." evidence="15" ref="1">
    <original>K</original>
    <variation>N</variation>
    <location>
        <position position="57"/>
    </location>
</feature>
<feature type="sequence conflict" description="In Ref. 1; CAA47900." evidence="15" ref="1">
    <original>RYD</original>
    <variation>CYY</variation>
    <location>
        <begin position="70"/>
        <end position="72"/>
    </location>
</feature>
<feature type="sequence conflict" description="In Ref. 1; CAA47900." evidence="15" ref="1">
    <original>P</original>
    <variation>S</variation>
    <location>
        <position position="80"/>
    </location>
</feature>
<feature type="sequence conflict" description="In Ref. 1; CAA47900." evidence="15" ref="1">
    <original>F</original>
    <variation>C</variation>
    <location>
        <position position="103"/>
    </location>
</feature>
<feature type="sequence conflict" description="In Ref. 1; CAA47900." evidence="15" ref="1">
    <original>H</original>
    <variation>Y</variation>
    <location>
        <position position="117"/>
    </location>
</feature>
<feature type="sequence conflict" description="In Ref. 1; CAA47900." evidence="15" ref="1">
    <original>D</original>
    <variation>E</variation>
    <location>
        <position position="140"/>
    </location>
</feature>
<feature type="sequence conflict" description="In Ref. 1; CAA47900." evidence="15" ref="1">
    <original>I</original>
    <variation>F</variation>
    <location>
        <position position="159"/>
    </location>
</feature>
<feature type="sequence conflict" description="In Ref. 1; CAA47900." evidence="15" ref="1">
    <original>A</original>
    <variation>V</variation>
    <location>
        <position position="164"/>
    </location>
</feature>
<feature type="sequence conflict" description="In Ref. 1; CAA47900." evidence="15" ref="1">
    <original>T</original>
    <variation>A</variation>
    <location>
        <position position="179"/>
    </location>
</feature>
<feature type="sequence conflict" description="In Ref. 1; CAA47900." evidence="15" ref="1">
    <original>KNEPEDEEEE</original>
    <variation>NDSED</variation>
    <location>
        <begin position="184"/>
        <end position="193"/>
    </location>
</feature>
<feature type="sequence conflict" description="In Ref. 1; CAA47900, 4; AAG36939 and 6; AAH02050." evidence="15" ref="1 4 6">
    <original>D</original>
    <variation>E</variation>
    <location>
        <position position="202"/>
    </location>
</feature>
<feature type="sequence conflict" description="In Ref. 1; CAA47900." evidence="15" ref="1">
    <original>E</original>
    <variation>G</variation>
    <location>
        <position position="204"/>
    </location>
</feature>
<organism>
    <name type="scientific">Mus musculus</name>
    <name type="common">Mouse</name>
    <dbReference type="NCBI Taxonomy" id="10090"/>
    <lineage>
        <taxon>Eukaryota</taxon>
        <taxon>Metazoa</taxon>
        <taxon>Chordata</taxon>
        <taxon>Craniata</taxon>
        <taxon>Vertebrata</taxon>
        <taxon>Euteleostomi</taxon>
        <taxon>Mammalia</taxon>
        <taxon>Eutheria</taxon>
        <taxon>Euarchontoglires</taxon>
        <taxon>Glires</taxon>
        <taxon>Rodentia</taxon>
        <taxon>Myomorpha</taxon>
        <taxon>Muroidea</taxon>
        <taxon>Muridae</taxon>
        <taxon>Murinae</taxon>
        <taxon>Mus</taxon>
        <taxon>Mus</taxon>
    </lineage>
</organism>
<protein>
    <recommendedName>
        <fullName>High mobility group protein B2</fullName>
    </recommendedName>
    <alternativeName>
        <fullName>High mobility group protein 2</fullName>
        <shortName>HMG-2</shortName>
    </alternativeName>
</protein>